<evidence type="ECO:0000250" key="1"/>
<evidence type="ECO:0000255" key="2">
    <source>
        <dbReference type="PROSITE-ProRule" id="PRU10096"/>
    </source>
</evidence>
<evidence type="ECO:0000305" key="3"/>
<sequence length="761" mass="83617">MTLATRTVTLPGGLQATLVHQPQADRAAALARVAAGSHHEPSRFPGLAHLLEHLLFYGGERYQDDDRLMGWVQRQGGSVNATTLARHSAFFFEVAADALADGVARLQEMLQAPLLLREDIQREVAVIDAEYRLIQQHEPSRREAAVRHAASAPAAFRRFQVGSADALAGDLAALQAALGDFHRTHYVARRMQLWLQGPQSLEALGELAARFAAGLAAGEAPPPAPPLRLGEFTALQLAVSSQPALWRCPLIALSDNVTLLREFLLDEAPGSLMAGLRQRRLAGDVALNWLYQDRHLGWLALVFASDRPEEVDRQITHWLQALQQTTPEQQQHYYQLSRRRFQALSPLDQLRQRAFGFAPGAPPAGFADFCAALQVAPSVSLACQTVSPGEPVATQGFSLPLSRWRRRPESDPALAFAFYPQAAGDLVAKCPEKAAPLLHLPSPGDPPRLLLRPPFYCSPDQAEGLARGEQLRPLLAALRHAGGHGEWHLFDGSWQLTLQLPEPGRRPEAILQAILRQLALPVASLTPSPESIAIRHLMAQLPERLGTSGHQKGWLAALAGGSAEDAQWVARQLSLITAPVNPPMPAPAPCRRGVERLVYPGGDTALLVFIPLPDGASLAALRLLAQHCEPLFFQRLRVEQQIGYVVSCRYQRVADRDGLLMALQSPDRRAGELLRCGKDFLRQLAPMDEATFRPLQQRLAAQIRASRPPEARALSALRQEYGLPELTPQAVDALRVAEVADLAREMTRRRRRWQVLFTTGD</sequence>
<reference key="1">
    <citation type="journal article" date="1992" name="Mol. Gen. Genet.">
        <title>Nucleotide sequence and structure of the Klebsiella pneumoniae pqq operon.</title>
        <authorList>
            <person name="Meulenberg J.J.M."/>
            <person name="Sellink E."/>
            <person name="Riegman N.H."/>
            <person name="Postma P.W."/>
        </authorList>
    </citation>
    <scope>NUCLEOTIDE SEQUENCE [GENOMIC DNA]</scope>
    <source>
        <strain>ATCC 15380 / DSM 2026 / NCTC 418 / NCIMB 418</strain>
    </source>
</reference>
<dbReference type="EC" id="3.4.24.-"/>
<dbReference type="EMBL" id="X58778">
    <property type="protein sequence ID" value="CAA41584.1"/>
    <property type="molecule type" value="Genomic_DNA"/>
</dbReference>
<dbReference type="PIR" id="S20458">
    <property type="entry name" value="S20458"/>
</dbReference>
<dbReference type="RefSeq" id="WP_004225013.1">
    <property type="nucleotide sequence ID" value="NZ_CABWNN010000006.1"/>
</dbReference>
<dbReference type="SMR" id="P27508"/>
<dbReference type="MEROPS" id="M16.006"/>
<dbReference type="BioCyc" id="MetaCyc:MONOMER-15351"/>
<dbReference type="UniPathway" id="UPA00539"/>
<dbReference type="GO" id="GO:0004222">
    <property type="term" value="F:metalloendopeptidase activity"/>
    <property type="evidence" value="ECO:0007669"/>
    <property type="project" value="InterPro"/>
</dbReference>
<dbReference type="GO" id="GO:0008270">
    <property type="term" value="F:zinc ion binding"/>
    <property type="evidence" value="ECO:0007669"/>
    <property type="project" value="InterPro"/>
</dbReference>
<dbReference type="GO" id="GO:0006508">
    <property type="term" value="P:proteolysis"/>
    <property type="evidence" value="ECO:0007669"/>
    <property type="project" value="UniProtKB-KW"/>
</dbReference>
<dbReference type="GO" id="GO:0018189">
    <property type="term" value="P:pyrroloquinoline quinone biosynthetic process"/>
    <property type="evidence" value="ECO:0007669"/>
    <property type="project" value="UniProtKB-UniPathway"/>
</dbReference>
<dbReference type="Gene3D" id="3.30.830.10">
    <property type="entry name" value="Metalloenzyme, LuxS/M16 peptidase-like"/>
    <property type="match status" value="2"/>
</dbReference>
<dbReference type="InterPro" id="IPR011249">
    <property type="entry name" value="Metalloenz_LuxS/M16"/>
</dbReference>
<dbReference type="InterPro" id="IPR011765">
    <property type="entry name" value="Pept_M16_N"/>
</dbReference>
<dbReference type="InterPro" id="IPR001431">
    <property type="entry name" value="Pept_M16_Zn_BS"/>
</dbReference>
<dbReference type="InterPro" id="IPR050626">
    <property type="entry name" value="Peptidase_M16"/>
</dbReference>
<dbReference type="InterPro" id="IPR011844">
    <property type="entry name" value="PQQ_synth_PqqF"/>
</dbReference>
<dbReference type="InterPro" id="IPR054734">
    <property type="entry name" value="PqqF-like_C_4"/>
</dbReference>
<dbReference type="InterPro" id="IPR054740">
    <property type="entry name" value="PqqF_N_2"/>
</dbReference>
<dbReference type="NCBIfam" id="TIGR02110">
    <property type="entry name" value="PQQ_syn_pqqF"/>
    <property type="match status" value="1"/>
</dbReference>
<dbReference type="PANTHER" id="PTHR43690:SF18">
    <property type="entry name" value="INSULIN-DEGRADING ENZYME-RELATED"/>
    <property type="match status" value="1"/>
</dbReference>
<dbReference type="PANTHER" id="PTHR43690">
    <property type="entry name" value="NARDILYSIN"/>
    <property type="match status" value="1"/>
</dbReference>
<dbReference type="Pfam" id="PF00675">
    <property type="entry name" value="Peptidase_M16"/>
    <property type="match status" value="1"/>
</dbReference>
<dbReference type="Pfam" id="PF22454">
    <property type="entry name" value="PQQ_syn_pqqF_N_2"/>
    <property type="match status" value="1"/>
</dbReference>
<dbReference type="Pfam" id="PF22456">
    <property type="entry name" value="PqqF-like_C_4"/>
    <property type="match status" value="1"/>
</dbReference>
<dbReference type="SUPFAM" id="SSF63411">
    <property type="entry name" value="LuxS/MPP-like metallohydrolase"/>
    <property type="match status" value="2"/>
</dbReference>
<dbReference type="PROSITE" id="PS00143">
    <property type="entry name" value="INSULINASE"/>
    <property type="match status" value="1"/>
</dbReference>
<proteinExistence type="inferred from homology"/>
<name>PQQF_KLEPN</name>
<organism>
    <name type="scientific">Klebsiella pneumoniae</name>
    <dbReference type="NCBI Taxonomy" id="573"/>
    <lineage>
        <taxon>Bacteria</taxon>
        <taxon>Pseudomonadati</taxon>
        <taxon>Pseudomonadota</taxon>
        <taxon>Gammaproteobacteria</taxon>
        <taxon>Enterobacterales</taxon>
        <taxon>Enterobacteriaceae</taxon>
        <taxon>Klebsiella/Raoultella group</taxon>
        <taxon>Klebsiella</taxon>
        <taxon>Klebsiella pneumoniae complex</taxon>
    </lineage>
</organism>
<keyword id="KW-0378">Hydrolase</keyword>
<keyword id="KW-0479">Metal-binding</keyword>
<keyword id="KW-0482">Metalloprotease</keyword>
<keyword id="KW-0884">PQQ biosynthesis</keyword>
<keyword id="KW-0645">Protease</keyword>
<keyword id="KW-0862">Zinc</keyword>
<comment type="function">
    <text>Required for coenzyme pyrroloquinoline quinone (PQQ) biosynthesis. It is thought that this protein is a protease that cleaves peptides bond in a small peptide (gene pqqA), providing the glutamate and tyrosine residues which are necessary for the synthesis of PQQ.</text>
</comment>
<comment type="cofactor">
    <cofactor evidence="1">
        <name>Zn(2+)</name>
        <dbReference type="ChEBI" id="CHEBI:29105"/>
    </cofactor>
    <text evidence="1">Binds 1 zinc ion per subunit.</text>
</comment>
<comment type="pathway">
    <text>Cofactor biosynthesis; pyrroloquinoline quinone biosynthesis.</text>
</comment>
<comment type="similarity">
    <text evidence="3">Belongs to the peptidase M16 family.</text>
</comment>
<accession>P27508</accession>
<protein>
    <recommendedName>
        <fullName>Coenzyme PQQ synthesis protein F</fullName>
        <ecNumber>3.4.24.-</ecNumber>
    </recommendedName>
    <alternativeName>
        <fullName>Pyrroloquinoline quinone biosynthesis protein F</fullName>
    </alternativeName>
</protein>
<feature type="chain" id="PRO_0000074410" description="Coenzyme PQQ synthesis protein F">
    <location>
        <begin position="1"/>
        <end position="761"/>
    </location>
</feature>
<feature type="active site" description="Proton acceptor" evidence="2">
    <location>
        <position position="52"/>
    </location>
</feature>
<feature type="binding site" evidence="2">
    <location>
        <position position="49"/>
    </location>
    <ligand>
        <name>Zn(2+)</name>
        <dbReference type="ChEBI" id="CHEBI:29105"/>
    </ligand>
</feature>
<feature type="binding site" evidence="2">
    <location>
        <position position="53"/>
    </location>
    <ligand>
        <name>Zn(2+)</name>
        <dbReference type="ChEBI" id="CHEBI:29105"/>
    </ligand>
</feature>
<feature type="binding site" evidence="2">
    <location>
        <position position="130"/>
    </location>
    <ligand>
        <name>Zn(2+)</name>
        <dbReference type="ChEBI" id="CHEBI:29105"/>
    </ligand>
</feature>
<gene>
    <name type="primary">pqqF</name>
</gene>